<protein>
    <recommendedName>
        <fullName>Chitin synthase 2</fullName>
        <ecNumber>2.4.1.16</ecNumber>
    </recommendedName>
    <alternativeName>
        <fullName>Chitin-UDP acetyl-glucosaminyl transferase 2</fullName>
    </alternativeName>
</protein>
<organism>
    <name type="scientific">Rhizopus oligosporus</name>
    <name type="common">Rhizopus microsporus var. oligosporus</name>
    <dbReference type="NCBI Taxonomy" id="4847"/>
    <lineage>
        <taxon>Eukaryota</taxon>
        <taxon>Fungi</taxon>
        <taxon>Fungi incertae sedis</taxon>
        <taxon>Mucoromycota</taxon>
        <taxon>Mucoromycotina</taxon>
        <taxon>Mucoromycetes</taxon>
        <taxon>Mucorales</taxon>
        <taxon>Mucorineae</taxon>
        <taxon>Rhizopodaceae</taxon>
        <taxon>Rhizopus</taxon>
    </lineage>
</organism>
<comment type="function">
    <text evidence="3">Polymerizes chitin, a structural polymer of the cell wall and septum, by transferring the sugar moiety of UDP-GlcNAc to the non-reducing end of the growing chitin polymer.</text>
</comment>
<comment type="catalytic activity">
    <reaction>
        <text>[(1-&gt;4)-N-acetyl-beta-D-glucosaminyl](n) + UDP-N-acetyl-alpha-D-glucosamine = [(1-&gt;4)-N-acetyl-beta-D-glucosaminyl](n+1) + UDP + H(+)</text>
        <dbReference type="Rhea" id="RHEA:16637"/>
        <dbReference type="Rhea" id="RHEA-COMP:9593"/>
        <dbReference type="Rhea" id="RHEA-COMP:9595"/>
        <dbReference type="ChEBI" id="CHEBI:15378"/>
        <dbReference type="ChEBI" id="CHEBI:17029"/>
        <dbReference type="ChEBI" id="CHEBI:57705"/>
        <dbReference type="ChEBI" id="CHEBI:58223"/>
        <dbReference type="EC" id="2.4.1.16"/>
    </reaction>
</comment>
<comment type="subcellular location">
    <subcellularLocation>
        <location evidence="3">Cell membrane</location>
        <topology evidence="1">Multi-pass membrane protein</topology>
    </subcellularLocation>
</comment>
<comment type="similarity">
    <text evidence="3">Belongs to the chitin synthase family.</text>
</comment>
<proteinExistence type="inferred from homology"/>
<sequence>MYPEGPKPEHDQFPLQDTQFSNQPPVHRSPFEDPYPEDQPHFDKQPLLTSPAYPPTQYPTSPPPPNFPGSPAVQQPYPPFNNNPSPVSPGVPAYFNPAPPSPNMHYGQAPRRQPRRFKTTRQVKLTKGNLVLDCPVPTAYLNDVPIKDGKEFTHMRYTAATCDPKDFASDGYTLRQPMLGRKTELFIVLTMYNEDEVLFARTMHGVMKNIAHLCTRDRSRTWGPNGWEKVVVCIVSDGRNKINQRTLSVLALLGVYQDGIAKNVVHGKPVTAHIYEYTTQVSVDPNMEVKKAGSKNVVPCQILFCLKEKNQKKINSHRWFFQAFGPVIDPHICVLIDVGTKPGGTSIYHLWKAFDINSNIAGACGEIRAMAGTRGVALLNPLVAAQNFEYKMSNILDKPLESVFGYISVLPGAFSAYRFKALQNDVNGHGPLEKYFLGETQHGGDADIFTANMYLAEDRILCYELVAKKEAHWVLHYVSSSYGETDVPDKVDEFISQRRRWLNGSFFAGVYALYHWRKVWQSDHSYLRKMMFMVEDIYNTYNLIFSWFALGNFYLTFFILTKALGHGVDGSTLTDPPFSPDTGETLHTVFNYIYIVLIVIQFIMALGNRPQGSKIAYTSSMVFFAILMVYMMFAAIWITVVGVKTVVETSGGQFIEMLEQSTFRNIIISLCATYVMYFVSSFMFLDPWHMFTSFIQYILLSPSYTNVLNIYAFCNTHDVSWGTKGDNTVATDLGVVKAKKDGSGDLAVEVEVPVEEKDINAAFIDAQVELTKKIEPEKSHRDAKTKQEDYYRSFRTRLVLAWIISNLALVVAIANTTVIDIKGKASIYLGFILWSVAGLSVIRFTGSTLYLIFKIFTG</sequence>
<keyword id="KW-1003">Cell membrane</keyword>
<keyword id="KW-0961">Cell wall biogenesis/degradation</keyword>
<keyword id="KW-0328">Glycosyltransferase</keyword>
<keyword id="KW-0472">Membrane</keyword>
<keyword id="KW-0808">Transferase</keyword>
<keyword id="KW-0812">Transmembrane</keyword>
<keyword id="KW-1133">Transmembrane helix</keyword>
<dbReference type="EC" id="2.4.1.16"/>
<dbReference type="EMBL" id="D10160">
    <property type="protein sequence ID" value="BAA01024.1"/>
    <property type="molecule type" value="Genomic_DNA"/>
</dbReference>
<dbReference type="PIR" id="JC2309">
    <property type="entry name" value="JC2309"/>
</dbReference>
<dbReference type="SMR" id="P30595"/>
<dbReference type="CAZy" id="GT2">
    <property type="family name" value="Glycosyltransferase Family 2"/>
</dbReference>
<dbReference type="GO" id="GO:0030428">
    <property type="term" value="C:cell septum"/>
    <property type="evidence" value="ECO:0007669"/>
    <property type="project" value="TreeGrafter"/>
</dbReference>
<dbReference type="GO" id="GO:0005886">
    <property type="term" value="C:plasma membrane"/>
    <property type="evidence" value="ECO:0007669"/>
    <property type="project" value="UniProtKB-SubCell"/>
</dbReference>
<dbReference type="GO" id="GO:0004100">
    <property type="term" value="F:chitin synthase activity"/>
    <property type="evidence" value="ECO:0007669"/>
    <property type="project" value="UniProtKB-EC"/>
</dbReference>
<dbReference type="GO" id="GO:0071555">
    <property type="term" value="P:cell wall organization"/>
    <property type="evidence" value="ECO:0007669"/>
    <property type="project" value="UniProtKB-KW"/>
</dbReference>
<dbReference type="GO" id="GO:0006031">
    <property type="term" value="P:chitin biosynthetic process"/>
    <property type="evidence" value="ECO:0007669"/>
    <property type="project" value="InterPro"/>
</dbReference>
<dbReference type="CDD" id="cd04190">
    <property type="entry name" value="Chitin_synth_C"/>
    <property type="match status" value="1"/>
</dbReference>
<dbReference type="InterPro" id="IPR004835">
    <property type="entry name" value="Chitin_synth"/>
</dbReference>
<dbReference type="InterPro" id="IPR004834">
    <property type="entry name" value="Chitin_synth_fun"/>
</dbReference>
<dbReference type="InterPro" id="IPR013616">
    <property type="entry name" value="Chitin_synth_N"/>
</dbReference>
<dbReference type="InterPro" id="IPR029044">
    <property type="entry name" value="Nucleotide-diphossugar_trans"/>
</dbReference>
<dbReference type="PANTHER" id="PTHR22914">
    <property type="entry name" value="CHITIN SYNTHASE"/>
    <property type="match status" value="1"/>
</dbReference>
<dbReference type="PANTHER" id="PTHR22914:SF9">
    <property type="entry name" value="CHITIN SYNTHASE 1"/>
    <property type="match status" value="1"/>
</dbReference>
<dbReference type="Pfam" id="PF01644">
    <property type="entry name" value="Chitin_synth_1"/>
    <property type="match status" value="1"/>
</dbReference>
<dbReference type="Pfam" id="PF08407">
    <property type="entry name" value="Chitin_synth_1N"/>
    <property type="match status" value="1"/>
</dbReference>
<dbReference type="SUPFAM" id="SSF81995">
    <property type="entry name" value="beta-sandwich domain of Sec23/24"/>
    <property type="match status" value="1"/>
</dbReference>
<dbReference type="SUPFAM" id="SSF53448">
    <property type="entry name" value="Nucleotide-diphospho-sugar transferases"/>
    <property type="match status" value="1"/>
</dbReference>
<accession>P30595</accession>
<gene>
    <name type="primary">CHS2</name>
</gene>
<evidence type="ECO:0000255" key="1"/>
<evidence type="ECO:0000256" key="2">
    <source>
        <dbReference type="SAM" id="MobiDB-lite"/>
    </source>
</evidence>
<evidence type="ECO:0000305" key="3"/>
<reference key="1">
    <citation type="journal article" date="1994" name="Biosci. Biotechnol. Biochem.">
        <title>Isolation and characterization of two chitin synthase genes of Rhizopus oligosporus.</title>
        <authorList>
            <person name="Motoyama T."/>
            <person name="Sudoh M."/>
            <person name="Horiuchi H."/>
            <person name="Ohta A."/>
            <person name="Takagi M."/>
        </authorList>
    </citation>
    <scope>NUCLEOTIDE SEQUENCE [GENOMIC DNA]</scope>
</reference>
<name>CHS2_RHIOL</name>
<feature type="chain" id="PRO_0000193712" description="Chitin synthase 2">
    <location>
        <begin position="1"/>
        <end position="858"/>
    </location>
</feature>
<feature type="transmembrane region" description="Helical" evidence="1">
    <location>
        <begin position="500"/>
        <end position="517"/>
    </location>
</feature>
<feature type="transmembrane region" description="Helical" evidence="1">
    <location>
        <begin position="540"/>
        <end position="560"/>
    </location>
</feature>
<feature type="transmembrane region" description="Helical" evidence="1">
    <location>
        <begin position="586"/>
        <end position="606"/>
    </location>
</feature>
<feature type="transmembrane region" description="Helical" evidence="1">
    <location>
        <begin position="621"/>
        <end position="641"/>
    </location>
</feature>
<feature type="transmembrane region" description="Helical" evidence="1">
    <location>
        <begin position="665"/>
        <end position="685"/>
    </location>
</feature>
<feature type="transmembrane region" description="Helical" evidence="1">
    <location>
        <begin position="799"/>
        <end position="819"/>
    </location>
</feature>
<feature type="transmembrane region" description="Helical" evidence="1">
    <location>
        <begin position="825"/>
        <end position="845"/>
    </location>
</feature>
<feature type="region of interest" description="Disordered" evidence="2">
    <location>
        <begin position="1"/>
        <end position="116"/>
    </location>
</feature>
<feature type="compositionally biased region" description="Basic and acidic residues" evidence="2">
    <location>
        <begin position="1"/>
        <end position="12"/>
    </location>
</feature>
<feature type="compositionally biased region" description="Polar residues" evidence="2">
    <location>
        <begin position="15"/>
        <end position="24"/>
    </location>
</feature>
<feature type="compositionally biased region" description="Pro residues" evidence="2">
    <location>
        <begin position="52"/>
        <end position="68"/>
    </location>
</feature>
<feature type="compositionally biased region" description="Pro residues" evidence="2">
    <location>
        <begin position="76"/>
        <end position="89"/>
    </location>
</feature>